<proteinExistence type="inferred from homology"/>
<dbReference type="EMBL" id="CP000826">
    <property type="protein sequence ID" value="ABV43634.1"/>
    <property type="molecule type" value="Genomic_DNA"/>
</dbReference>
<dbReference type="SMR" id="A8GKJ4"/>
<dbReference type="STRING" id="399741.Spro_4541"/>
<dbReference type="KEGG" id="spe:Spro_4541"/>
<dbReference type="eggNOG" id="COG0090">
    <property type="taxonomic scope" value="Bacteria"/>
</dbReference>
<dbReference type="HOGENOM" id="CLU_036235_2_1_6"/>
<dbReference type="OrthoDB" id="9778722at2"/>
<dbReference type="GO" id="GO:0015934">
    <property type="term" value="C:large ribosomal subunit"/>
    <property type="evidence" value="ECO:0007669"/>
    <property type="project" value="InterPro"/>
</dbReference>
<dbReference type="GO" id="GO:0019843">
    <property type="term" value="F:rRNA binding"/>
    <property type="evidence" value="ECO:0007669"/>
    <property type="project" value="UniProtKB-UniRule"/>
</dbReference>
<dbReference type="GO" id="GO:0003735">
    <property type="term" value="F:structural constituent of ribosome"/>
    <property type="evidence" value="ECO:0007669"/>
    <property type="project" value="InterPro"/>
</dbReference>
<dbReference type="GO" id="GO:0016740">
    <property type="term" value="F:transferase activity"/>
    <property type="evidence" value="ECO:0007669"/>
    <property type="project" value="InterPro"/>
</dbReference>
<dbReference type="GO" id="GO:0002181">
    <property type="term" value="P:cytoplasmic translation"/>
    <property type="evidence" value="ECO:0007669"/>
    <property type="project" value="TreeGrafter"/>
</dbReference>
<dbReference type="FunFam" id="2.30.30.30:FF:000001">
    <property type="entry name" value="50S ribosomal protein L2"/>
    <property type="match status" value="1"/>
</dbReference>
<dbReference type="FunFam" id="2.40.50.140:FF:000003">
    <property type="entry name" value="50S ribosomal protein L2"/>
    <property type="match status" value="1"/>
</dbReference>
<dbReference type="FunFam" id="4.10.950.10:FF:000001">
    <property type="entry name" value="50S ribosomal protein L2"/>
    <property type="match status" value="1"/>
</dbReference>
<dbReference type="Gene3D" id="2.30.30.30">
    <property type="match status" value="1"/>
</dbReference>
<dbReference type="Gene3D" id="2.40.50.140">
    <property type="entry name" value="Nucleic acid-binding proteins"/>
    <property type="match status" value="1"/>
</dbReference>
<dbReference type="Gene3D" id="4.10.950.10">
    <property type="entry name" value="Ribosomal protein L2, domain 3"/>
    <property type="match status" value="1"/>
</dbReference>
<dbReference type="HAMAP" id="MF_01320_B">
    <property type="entry name" value="Ribosomal_uL2_B"/>
    <property type="match status" value="1"/>
</dbReference>
<dbReference type="InterPro" id="IPR012340">
    <property type="entry name" value="NA-bd_OB-fold"/>
</dbReference>
<dbReference type="InterPro" id="IPR014722">
    <property type="entry name" value="Rib_uL2_dom2"/>
</dbReference>
<dbReference type="InterPro" id="IPR002171">
    <property type="entry name" value="Ribosomal_uL2"/>
</dbReference>
<dbReference type="InterPro" id="IPR005880">
    <property type="entry name" value="Ribosomal_uL2_bac/org-type"/>
</dbReference>
<dbReference type="InterPro" id="IPR022669">
    <property type="entry name" value="Ribosomal_uL2_C"/>
</dbReference>
<dbReference type="InterPro" id="IPR022671">
    <property type="entry name" value="Ribosomal_uL2_CS"/>
</dbReference>
<dbReference type="InterPro" id="IPR014726">
    <property type="entry name" value="Ribosomal_uL2_dom3"/>
</dbReference>
<dbReference type="InterPro" id="IPR022666">
    <property type="entry name" value="Ribosomal_uL2_RNA-bd_dom"/>
</dbReference>
<dbReference type="InterPro" id="IPR008991">
    <property type="entry name" value="Translation_prot_SH3-like_sf"/>
</dbReference>
<dbReference type="NCBIfam" id="TIGR01171">
    <property type="entry name" value="rplB_bact"/>
    <property type="match status" value="1"/>
</dbReference>
<dbReference type="PANTHER" id="PTHR13691:SF5">
    <property type="entry name" value="LARGE RIBOSOMAL SUBUNIT PROTEIN UL2M"/>
    <property type="match status" value="1"/>
</dbReference>
<dbReference type="PANTHER" id="PTHR13691">
    <property type="entry name" value="RIBOSOMAL PROTEIN L2"/>
    <property type="match status" value="1"/>
</dbReference>
<dbReference type="Pfam" id="PF00181">
    <property type="entry name" value="Ribosomal_L2"/>
    <property type="match status" value="1"/>
</dbReference>
<dbReference type="Pfam" id="PF03947">
    <property type="entry name" value="Ribosomal_L2_C"/>
    <property type="match status" value="1"/>
</dbReference>
<dbReference type="PIRSF" id="PIRSF002158">
    <property type="entry name" value="Ribosomal_L2"/>
    <property type="match status" value="1"/>
</dbReference>
<dbReference type="SMART" id="SM01383">
    <property type="entry name" value="Ribosomal_L2"/>
    <property type="match status" value="1"/>
</dbReference>
<dbReference type="SMART" id="SM01382">
    <property type="entry name" value="Ribosomal_L2_C"/>
    <property type="match status" value="1"/>
</dbReference>
<dbReference type="SUPFAM" id="SSF50249">
    <property type="entry name" value="Nucleic acid-binding proteins"/>
    <property type="match status" value="1"/>
</dbReference>
<dbReference type="SUPFAM" id="SSF50104">
    <property type="entry name" value="Translation proteins SH3-like domain"/>
    <property type="match status" value="1"/>
</dbReference>
<dbReference type="PROSITE" id="PS00467">
    <property type="entry name" value="RIBOSOMAL_L2"/>
    <property type="match status" value="1"/>
</dbReference>
<protein>
    <recommendedName>
        <fullName evidence="1">Large ribosomal subunit protein uL2</fullName>
    </recommendedName>
    <alternativeName>
        <fullName evidence="3">50S ribosomal protein L2</fullName>
    </alternativeName>
</protein>
<sequence>MAIVKCKPTSPGRRHVVKVVNPELHKGKPHAPLLEKLSKSGGRNNNGRITTRHIGGGHKQHYRLVDFKRNKDGVAAVVERLEYDPNRSANIALVLYKDGERRYILAPKGLKAGDQIQSGVDAAIKVGNALPMRNIPVGSTVHNVEMKPGKGGQIARSAGAYVQIVARDGSYVTLRLRSGEMRKVPVDCRATLGEVGNAEHMLRVLGKAGAARWRGIRPTVRGTAMNPVDHPHGGGEGKNFGKHPVTPWGVQTKGKKTRSNKRTDKFIVRRRSKK</sequence>
<keyword id="KW-0687">Ribonucleoprotein</keyword>
<keyword id="KW-0689">Ribosomal protein</keyword>
<keyword id="KW-0694">RNA-binding</keyword>
<keyword id="KW-0699">rRNA-binding</keyword>
<name>RL2_SERP5</name>
<feature type="chain" id="PRO_1000067545" description="Large ribosomal subunit protein uL2">
    <location>
        <begin position="1"/>
        <end position="274"/>
    </location>
</feature>
<feature type="region of interest" description="Disordered" evidence="2">
    <location>
        <begin position="221"/>
        <end position="274"/>
    </location>
</feature>
<accession>A8GKJ4</accession>
<organism>
    <name type="scientific">Serratia proteamaculans (strain 568)</name>
    <dbReference type="NCBI Taxonomy" id="399741"/>
    <lineage>
        <taxon>Bacteria</taxon>
        <taxon>Pseudomonadati</taxon>
        <taxon>Pseudomonadota</taxon>
        <taxon>Gammaproteobacteria</taxon>
        <taxon>Enterobacterales</taxon>
        <taxon>Yersiniaceae</taxon>
        <taxon>Serratia</taxon>
    </lineage>
</organism>
<reference key="1">
    <citation type="submission" date="2007-09" db="EMBL/GenBank/DDBJ databases">
        <title>Complete sequence of chromosome of Serratia proteamaculans 568.</title>
        <authorList>
            <consortium name="US DOE Joint Genome Institute"/>
            <person name="Copeland A."/>
            <person name="Lucas S."/>
            <person name="Lapidus A."/>
            <person name="Barry K."/>
            <person name="Glavina del Rio T."/>
            <person name="Dalin E."/>
            <person name="Tice H."/>
            <person name="Pitluck S."/>
            <person name="Chain P."/>
            <person name="Malfatti S."/>
            <person name="Shin M."/>
            <person name="Vergez L."/>
            <person name="Schmutz J."/>
            <person name="Larimer F."/>
            <person name="Land M."/>
            <person name="Hauser L."/>
            <person name="Kyrpides N."/>
            <person name="Kim E."/>
            <person name="Taghavi S."/>
            <person name="Newman L."/>
            <person name="Vangronsveld J."/>
            <person name="van der Lelie D."/>
            <person name="Richardson P."/>
        </authorList>
    </citation>
    <scope>NUCLEOTIDE SEQUENCE [LARGE SCALE GENOMIC DNA]</scope>
    <source>
        <strain>568</strain>
    </source>
</reference>
<comment type="function">
    <text evidence="1">One of the primary rRNA binding proteins. Required for association of the 30S and 50S subunits to form the 70S ribosome, for tRNA binding and peptide bond formation. It has been suggested to have peptidyltransferase activity; this is somewhat controversial. Makes several contacts with the 16S rRNA in the 70S ribosome.</text>
</comment>
<comment type="subunit">
    <text evidence="1">Part of the 50S ribosomal subunit. Forms a bridge to the 30S subunit in the 70S ribosome.</text>
</comment>
<comment type="similarity">
    <text evidence="1">Belongs to the universal ribosomal protein uL2 family.</text>
</comment>
<evidence type="ECO:0000255" key="1">
    <source>
        <dbReference type="HAMAP-Rule" id="MF_01320"/>
    </source>
</evidence>
<evidence type="ECO:0000256" key="2">
    <source>
        <dbReference type="SAM" id="MobiDB-lite"/>
    </source>
</evidence>
<evidence type="ECO:0000305" key="3"/>
<gene>
    <name evidence="1" type="primary">rplB</name>
    <name type="ordered locus">Spro_4541</name>
</gene>